<geneLocation type="organellar chromatophore"/>
<comment type="function">
    <text evidence="1">This protein binds specifically to 23S rRNA.</text>
</comment>
<comment type="function">
    <text evidence="1">The globular domain of the protein is located near the polypeptide exit tunnel on the outside of the subunit, while an extended beta-hairpin is found that lines the wall of the exit tunnel in the center of the 70S ribosome.</text>
</comment>
<comment type="subunit">
    <text evidence="1">Part of the 50S ribosomal subunit.</text>
</comment>
<comment type="subcellular location">
    <subcellularLocation>
        <location>Plastid</location>
        <location>Organellar chromatophore</location>
    </subcellularLocation>
</comment>
<comment type="similarity">
    <text evidence="2">Belongs to the universal ribosomal protein uL22 family.</text>
</comment>
<evidence type="ECO:0000250" key="1"/>
<evidence type="ECO:0000305" key="2"/>
<dbReference type="EMBL" id="CP000815">
    <property type="protein sequence ID" value="ACB43022.1"/>
    <property type="molecule type" value="Genomic_DNA"/>
</dbReference>
<dbReference type="RefSeq" id="YP_002049232.1">
    <property type="nucleotide sequence ID" value="NC_011087.1"/>
</dbReference>
<dbReference type="SMR" id="B1X503"/>
<dbReference type="GeneID" id="6481792"/>
<dbReference type="GO" id="GO:0022625">
    <property type="term" value="C:cytosolic large ribosomal subunit"/>
    <property type="evidence" value="ECO:0007669"/>
    <property type="project" value="TreeGrafter"/>
</dbReference>
<dbReference type="GO" id="GO:0070111">
    <property type="term" value="C:organellar chromatophore"/>
    <property type="evidence" value="ECO:0007669"/>
    <property type="project" value="UniProtKB-SubCell"/>
</dbReference>
<dbReference type="GO" id="GO:0009536">
    <property type="term" value="C:plastid"/>
    <property type="evidence" value="ECO:0007669"/>
    <property type="project" value="UniProtKB-KW"/>
</dbReference>
<dbReference type="GO" id="GO:0019843">
    <property type="term" value="F:rRNA binding"/>
    <property type="evidence" value="ECO:0007669"/>
    <property type="project" value="UniProtKB-KW"/>
</dbReference>
<dbReference type="GO" id="GO:0003735">
    <property type="term" value="F:structural constituent of ribosome"/>
    <property type="evidence" value="ECO:0007669"/>
    <property type="project" value="InterPro"/>
</dbReference>
<dbReference type="GO" id="GO:0006412">
    <property type="term" value="P:translation"/>
    <property type="evidence" value="ECO:0007669"/>
    <property type="project" value="InterPro"/>
</dbReference>
<dbReference type="CDD" id="cd00336">
    <property type="entry name" value="Ribosomal_L22"/>
    <property type="match status" value="1"/>
</dbReference>
<dbReference type="Gene3D" id="3.90.470.10">
    <property type="entry name" value="Ribosomal protein L22/L17"/>
    <property type="match status" value="1"/>
</dbReference>
<dbReference type="HAMAP" id="MF_01331_B">
    <property type="entry name" value="Ribosomal_uL22_B"/>
    <property type="match status" value="1"/>
</dbReference>
<dbReference type="InterPro" id="IPR001063">
    <property type="entry name" value="Ribosomal_uL22"/>
</dbReference>
<dbReference type="InterPro" id="IPR005727">
    <property type="entry name" value="Ribosomal_uL22_bac/chlpt-type"/>
</dbReference>
<dbReference type="InterPro" id="IPR047867">
    <property type="entry name" value="Ribosomal_uL22_bac/org-type"/>
</dbReference>
<dbReference type="InterPro" id="IPR018260">
    <property type="entry name" value="Ribosomal_uL22_CS"/>
</dbReference>
<dbReference type="InterPro" id="IPR036394">
    <property type="entry name" value="Ribosomal_uL22_sf"/>
</dbReference>
<dbReference type="NCBIfam" id="TIGR01044">
    <property type="entry name" value="rplV_bact"/>
    <property type="match status" value="1"/>
</dbReference>
<dbReference type="PANTHER" id="PTHR13501">
    <property type="entry name" value="CHLOROPLAST 50S RIBOSOMAL PROTEIN L22-RELATED"/>
    <property type="match status" value="1"/>
</dbReference>
<dbReference type="PANTHER" id="PTHR13501:SF8">
    <property type="entry name" value="LARGE RIBOSOMAL SUBUNIT PROTEIN UL22M"/>
    <property type="match status" value="1"/>
</dbReference>
<dbReference type="Pfam" id="PF00237">
    <property type="entry name" value="Ribosomal_L22"/>
    <property type="match status" value="1"/>
</dbReference>
<dbReference type="SUPFAM" id="SSF54843">
    <property type="entry name" value="Ribosomal protein L22"/>
    <property type="match status" value="1"/>
</dbReference>
<dbReference type="PROSITE" id="PS00464">
    <property type="entry name" value="RIBOSOMAL_L22"/>
    <property type="match status" value="1"/>
</dbReference>
<reference key="1">
    <citation type="journal article" date="2008" name="Curr. Biol.">
        <title>Chromatophore genome sequence of Paulinella sheds light on acquisition of photosynthesis by eukaryotes.</title>
        <authorList>
            <person name="Nowack E.C.M."/>
            <person name="Melkonian M."/>
            <person name="Gloeckner G."/>
        </authorList>
    </citation>
    <scope>NUCLEOTIDE SEQUENCE [LARGE SCALE GENOMIC DNA]</scope>
</reference>
<gene>
    <name type="primary">rpl22</name>
    <name type="ordered locus">PCC_0592</name>
</gene>
<name>RK22_PAUCH</name>
<organism>
    <name type="scientific">Paulinella chromatophora</name>
    <dbReference type="NCBI Taxonomy" id="39717"/>
    <lineage>
        <taxon>Eukaryota</taxon>
        <taxon>Sar</taxon>
        <taxon>Rhizaria</taxon>
        <taxon>Cercozoa</taxon>
        <taxon>Imbricatea</taxon>
        <taxon>Silicofilosea</taxon>
        <taxon>Euglyphida</taxon>
        <taxon>Paulinellidae</taxon>
        <taxon>Paulinella</taxon>
    </lineage>
</organism>
<keyword id="KW-0994">Organellar chromatophore</keyword>
<keyword id="KW-0934">Plastid</keyword>
<keyword id="KW-0687">Ribonucleoprotein</keyword>
<keyword id="KW-0689">Ribosomal protein</keyword>
<keyword id="KW-0694">RNA-binding</keyword>
<keyword id="KW-0699">rRNA-binding</keyword>
<feature type="chain" id="PRO_0000354595" description="Large ribosomal subunit protein uL22c">
    <location>
        <begin position="1"/>
        <end position="118"/>
    </location>
</feature>
<proteinExistence type="inferred from homology"/>
<sequence length="118" mass="13153">MADPILYSQALAHGRRIKGSVSKVRRVLDQIRGRSYREALIMLEFMPYRSTAPITKVLRSAVANAEHNLGLDPSTLIINRATADMGSSMKRYRPRAQGRAFAIKKQTCHISIGVVTQT</sequence>
<accession>B1X503</accession>
<protein>
    <recommendedName>
        <fullName evidence="2">Large ribosomal subunit protein uL22c</fullName>
    </recommendedName>
    <alternativeName>
        <fullName>50S ribosomal protein L22, organellar chromatophore</fullName>
    </alternativeName>
</protein>